<sequence length="200" mass="22020">MFAELAPYLSNPRQTLAQILNFALVLSTAFMGWKALSVYTNSSSPIVVVLSGSMEPAFQRGDLLFLWNNSPRAEVGEIVVYNVQGKDIPIVHRVIKAFGTGDGGKKSQRRLEKEADKRSGPGLSSPISHQMLTKGDNNIADDTELYAQGQDYLDRKLDIVGSVRGYIPAVGYVTIMLAENPWMKTVLLGIMGVMVMLQRE</sequence>
<keyword id="KW-0256">Endoplasmic reticulum</keyword>
<keyword id="KW-0325">Glycoprotein</keyword>
<keyword id="KW-0378">Hydrolase</keyword>
<keyword id="KW-0472">Membrane</keyword>
<keyword id="KW-0645">Protease</keyword>
<keyword id="KW-1185">Reference proteome</keyword>
<keyword id="KW-0735">Signal-anchor</keyword>
<keyword id="KW-0812">Transmembrane</keyword>
<keyword id="KW-1133">Transmembrane helix</keyword>
<comment type="function">
    <text evidence="1 2">Catalytic component of the signal peptidase complex (SPC) which catalyzes the cleavage of N-terminal signal sequences from nascent proteins as they are translocated into the lumen of the endoplasmic reticulum (By similarity). Specifically cleaves N-terminal signal peptides that contain a hydrophobic alpha-helix (h-region) shorter than 18-20 amino acids (By similarity).</text>
</comment>
<comment type="catalytic activity">
    <reaction evidence="1">
        <text>Cleavage of hydrophobic, N-terminal signal or leader sequences from secreted and periplasmic proteins.</text>
        <dbReference type="EC" id="3.4.21.89"/>
    </reaction>
</comment>
<comment type="subunit">
    <text evidence="1 2">Component of the signal peptidase complex (SPC) composed of a catalytic subunit SEC11 and three accessory subunits SPC1, SPC2 and SPC3 (By similarity). The complex induces a local thinning of the ER membrane which is used to measure the length of the signal peptide (SP) h-region of protein substrates. This ensures the selectivity of the complex towards h-regions shorter than 18-20 amino acids (By similarity). SPC associates with the translocon complex (By similarity).</text>
</comment>
<comment type="subcellular location">
    <subcellularLocation>
        <location evidence="1">Endoplasmic reticulum membrane</location>
        <topology evidence="1">Single-pass type II membrane protein</topology>
    </subcellularLocation>
</comment>
<comment type="domain">
    <text evidence="2">The C-terminal short (CTS) helix is essential for catalytic activity. It may be accommodated as a transmembrane helix in the thinned membrane environment of the complex, similarly to the signal peptide in the complex substrates.</text>
</comment>
<comment type="similarity">
    <text evidence="5">Belongs to the peptidase S26B family.</text>
</comment>
<name>SEC11_ARTGP</name>
<gene>
    <name type="primary">SEC11</name>
    <name type="ORF">MGYG_08049</name>
</gene>
<dbReference type="EC" id="3.4.21.89" evidence="1"/>
<dbReference type="EMBL" id="DS989829">
    <property type="protein sequence ID" value="EFR05044.1"/>
    <property type="molecule type" value="Genomic_DNA"/>
</dbReference>
<dbReference type="RefSeq" id="XP_003169879.1">
    <property type="nucleotide sequence ID" value="XM_003169831.1"/>
</dbReference>
<dbReference type="SMR" id="E4V4X0"/>
<dbReference type="FunCoup" id="E4V4X0">
    <property type="interactions" value="656"/>
</dbReference>
<dbReference type="STRING" id="535722.E4V4X0"/>
<dbReference type="MEROPS" id="S26.010"/>
<dbReference type="GlyCosmos" id="E4V4X0">
    <property type="glycosylation" value="1 site, No reported glycans"/>
</dbReference>
<dbReference type="GeneID" id="10025112"/>
<dbReference type="VEuPathDB" id="FungiDB:MGYG_08049"/>
<dbReference type="eggNOG" id="KOG3342">
    <property type="taxonomic scope" value="Eukaryota"/>
</dbReference>
<dbReference type="HOGENOM" id="CLU_089996_0_0_1"/>
<dbReference type="InParanoid" id="E4V4X0"/>
<dbReference type="OMA" id="ILMNEYP"/>
<dbReference type="OrthoDB" id="10257561at2759"/>
<dbReference type="Proteomes" id="UP000002669">
    <property type="component" value="Unassembled WGS sequence"/>
</dbReference>
<dbReference type="GO" id="GO:0005787">
    <property type="term" value="C:signal peptidase complex"/>
    <property type="evidence" value="ECO:0007669"/>
    <property type="project" value="EnsemblFungi"/>
</dbReference>
<dbReference type="GO" id="GO:0004252">
    <property type="term" value="F:serine-type endopeptidase activity"/>
    <property type="evidence" value="ECO:0007669"/>
    <property type="project" value="UniProtKB-EC"/>
</dbReference>
<dbReference type="GO" id="GO:0045047">
    <property type="term" value="P:protein targeting to ER"/>
    <property type="evidence" value="ECO:0007669"/>
    <property type="project" value="EnsemblFungi"/>
</dbReference>
<dbReference type="GO" id="GO:0006465">
    <property type="term" value="P:signal peptide processing"/>
    <property type="evidence" value="ECO:0007669"/>
    <property type="project" value="EnsemblFungi"/>
</dbReference>
<dbReference type="CDD" id="cd06530">
    <property type="entry name" value="S26_SPase_I"/>
    <property type="match status" value="1"/>
</dbReference>
<dbReference type="InterPro" id="IPR036286">
    <property type="entry name" value="LexA/Signal_pep-like_sf"/>
</dbReference>
<dbReference type="InterPro" id="IPR019756">
    <property type="entry name" value="Pept_S26A_signal_pept_1_Ser-AS"/>
</dbReference>
<dbReference type="InterPro" id="IPR019533">
    <property type="entry name" value="Peptidase_S26"/>
</dbReference>
<dbReference type="InterPro" id="IPR001733">
    <property type="entry name" value="Peptidase_S26B"/>
</dbReference>
<dbReference type="NCBIfam" id="TIGR02228">
    <property type="entry name" value="sigpep_I_arch"/>
    <property type="match status" value="1"/>
</dbReference>
<dbReference type="PANTHER" id="PTHR10806">
    <property type="entry name" value="SIGNAL PEPTIDASE COMPLEX CATALYTIC SUBUNIT SEC11"/>
    <property type="match status" value="1"/>
</dbReference>
<dbReference type="PANTHER" id="PTHR10806:SF6">
    <property type="entry name" value="SIGNAL PEPTIDASE COMPLEX CATALYTIC SUBUNIT SEC11"/>
    <property type="match status" value="1"/>
</dbReference>
<dbReference type="SUPFAM" id="SSF51306">
    <property type="entry name" value="LexA/Signal peptidase"/>
    <property type="match status" value="1"/>
</dbReference>
<dbReference type="PROSITE" id="PS00501">
    <property type="entry name" value="SPASE_I_1"/>
    <property type="match status" value="1"/>
</dbReference>
<evidence type="ECO:0000250" key="1">
    <source>
        <dbReference type="UniProtKB" id="P15367"/>
    </source>
</evidence>
<evidence type="ECO:0000250" key="2">
    <source>
        <dbReference type="UniProtKB" id="P67812"/>
    </source>
</evidence>
<evidence type="ECO:0000255" key="3"/>
<evidence type="ECO:0000256" key="4">
    <source>
        <dbReference type="SAM" id="MobiDB-lite"/>
    </source>
</evidence>
<evidence type="ECO:0000305" key="5"/>
<feature type="chain" id="PRO_0000412313" description="Signal peptidase complex catalytic subunit SEC11">
    <location>
        <begin position="1"/>
        <end position="200"/>
    </location>
</feature>
<feature type="topological domain" description="Cytoplasmic" evidence="3">
    <location>
        <begin position="1"/>
        <end position="15"/>
    </location>
</feature>
<feature type="transmembrane region" description="Helical; Signal-anchor for type II membrane protein" evidence="3">
    <location>
        <begin position="16"/>
        <end position="33"/>
    </location>
</feature>
<feature type="topological domain" description="Lumenal" evidence="3">
    <location>
        <begin position="34"/>
        <end position="200"/>
    </location>
</feature>
<feature type="region of interest" description="Disordered" evidence="4">
    <location>
        <begin position="101"/>
        <end position="131"/>
    </location>
</feature>
<feature type="region of interest" description="C-terminal short (CTS) helix" evidence="2">
    <location>
        <begin position="186"/>
        <end position="197"/>
    </location>
</feature>
<feature type="compositionally biased region" description="Basic and acidic residues" evidence="4">
    <location>
        <begin position="103"/>
        <end position="119"/>
    </location>
</feature>
<feature type="active site" description="Charge relay system" evidence="1">
    <location>
        <position position="53"/>
    </location>
</feature>
<feature type="active site" description="Charge relay system" evidence="1">
    <location>
        <position position="92"/>
    </location>
</feature>
<feature type="active site" description="Charge relay system" evidence="1">
    <location>
        <position position="142"/>
    </location>
</feature>
<feature type="glycosylation site" description="N-linked (GlcNAc...) asparagine" evidence="3">
    <location>
        <position position="41"/>
    </location>
</feature>
<organism>
    <name type="scientific">Arthroderma gypseum (strain ATCC MYA-4604 / CBS 118893)</name>
    <name type="common">Microsporum gypseum</name>
    <dbReference type="NCBI Taxonomy" id="535722"/>
    <lineage>
        <taxon>Eukaryota</taxon>
        <taxon>Fungi</taxon>
        <taxon>Dikarya</taxon>
        <taxon>Ascomycota</taxon>
        <taxon>Pezizomycotina</taxon>
        <taxon>Eurotiomycetes</taxon>
        <taxon>Eurotiomycetidae</taxon>
        <taxon>Onygenales</taxon>
        <taxon>Arthrodermataceae</taxon>
        <taxon>Nannizzia</taxon>
    </lineage>
</organism>
<protein>
    <recommendedName>
        <fullName>Signal peptidase complex catalytic subunit SEC11</fullName>
        <ecNumber evidence="1">3.4.21.89</ecNumber>
    </recommendedName>
    <alternativeName>
        <fullName>Signal peptidase I</fullName>
    </alternativeName>
</protein>
<accession>E4V4X0</accession>
<proteinExistence type="inferred from homology"/>
<reference key="1">
    <citation type="journal article" date="2012" name="MBio">
        <title>Comparative genome analysis of Trichophyton rubrum and related dermatophytes reveals candidate genes involved in infection.</title>
        <authorList>
            <person name="Martinez D.A."/>
            <person name="Oliver B.G."/>
            <person name="Graeser Y."/>
            <person name="Goldberg J.M."/>
            <person name="Li W."/>
            <person name="Martinez-Rossi N.M."/>
            <person name="Monod M."/>
            <person name="Shelest E."/>
            <person name="Barton R.C."/>
            <person name="Birch E."/>
            <person name="Brakhage A.A."/>
            <person name="Chen Z."/>
            <person name="Gurr S.J."/>
            <person name="Heiman D."/>
            <person name="Heitman J."/>
            <person name="Kosti I."/>
            <person name="Rossi A."/>
            <person name="Saif S."/>
            <person name="Samalova M."/>
            <person name="Saunders C.W."/>
            <person name="Shea T."/>
            <person name="Summerbell R.C."/>
            <person name="Xu J."/>
            <person name="Young S."/>
            <person name="Zeng Q."/>
            <person name="Birren B.W."/>
            <person name="Cuomo C.A."/>
            <person name="White T.C."/>
        </authorList>
    </citation>
    <scope>NUCLEOTIDE SEQUENCE [LARGE SCALE GENOMIC DNA]</scope>
    <source>
        <strain>ATCC MYA-4604 / CBS 118893</strain>
    </source>
</reference>